<reference key="1">
    <citation type="journal article" date="1992" name="J. Bacteriol.">
        <title>Multicopy suppression: an approach to understanding intracellular functioning of the protein export system.</title>
        <authorList>
            <person name="Ueguchi C."/>
            <person name="Ito K."/>
        </authorList>
    </citation>
    <scope>NUCLEOTIDE SEQUENCE [GENOMIC DNA]</scope>
    <source>
        <strain>K12</strain>
    </source>
</reference>
<reference key="2">
    <citation type="journal article" date="1996" name="DNA Res.">
        <title>A 718-kb DNA sequence of the Escherichia coli K-12 genome corresponding to the 12.7-28.0 min region on the linkage map.</title>
        <authorList>
            <person name="Oshima T."/>
            <person name="Aiba H."/>
            <person name="Baba T."/>
            <person name="Fujita K."/>
            <person name="Hayashi K."/>
            <person name="Honjo A."/>
            <person name="Ikemoto K."/>
            <person name="Inada T."/>
            <person name="Itoh T."/>
            <person name="Kajihara M."/>
            <person name="Kanai K."/>
            <person name="Kashimoto K."/>
            <person name="Kimura S."/>
            <person name="Kitagawa M."/>
            <person name="Makino K."/>
            <person name="Masuda S."/>
            <person name="Miki T."/>
            <person name="Mizobuchi K."/>
            <person name="Mori H."/>
            <person name="Motomura K."/>
            <person name="Nakamura Y."/>
            <person name="Nashimoto H."/>
            <person name="Nishio Y."/>
            <person name="Saito N."/>
            <person name="Sampei G."/>
            <person name="Seki Y."/>
            <person name="Tagami H."/>
            <person name="Takemoto K."/>
            <person name="Wada C."/>
            <person name="Yamamoto Y."/>
            <person name="Yano M."/>
            <person name="Horiuchi T."/>
        </authorList>
    </citation>
    <scope>NUCLEOTIDE SEQUENCE [LARGE SCALE GENOMIC DNA]</scope>
    <source>
        <strain>K12 / W3110 / ATCC 27325 / DSM 5911</strain>
    </source>
</reference>
<reference key="3">
    <citation type="journal article" date="1997" name="Science">
        <title>The complete genome sequence of Escherichia coli K-12.</title>
        <authorList>
            <person name="Blattner F.R."/>
            <person name="Plunkett G. III"/>
            <person name="Bloch C.A."/>
            <person name="Perna N.T."/>
            <person name="Burland V."/>
            <person name="Riley M."/>
            <person name="Collado-Vides J."/>
            <person name="Glasner J.D."/>
            <person name="Rode C.K."/>
            <person name="Mayhew G.F."/>
            <person name="Gregor J."/>
            <person name="Davis N.W."/>
            <person name="Kirkpatrick H.A."/>
            <person name="Goeden M.A."/>
            <person name="Rose D.J."/>
            <person name="Mau B."/>
            <person name="Shao Y."/>
        </authorList>
    </citation>
    <scope>NUCLEOTIDE SEQUENCE [LARGE SCALE GENOMIC DNA]</scope>
    <source>
        <strain>K12 / MG1655 / ATCC 47076</strain>
    </source>
</reference>
<reference key="4">
    <citation type="journal article" date="2006" name="Mol. Syst. Biol.">
        <title>Highly accurate genome sequences of Escherichia coli K-12 strains MG1655 and W3110.</title>
        <authorList>
            <person name="Hayashi K."/>
            <person name="Morooka N."/>
            <person name="Yamamoto Y."/>
            <person name="Fujita K."/>
            <person name="Isono K."/>
            <person name="Choi S."/>
            <person name="Ohtsubo E."/>
            <person name="Baba T."/>
            <person name="Wanner B.L."/>
            <person name="Mori H."/>
            <person name="Horiuchi T."/>
        </authorList>
    </citation>
    <scope>NUCLEOTIDE SEQUENCE [LARGE SCALE GENOMIC DNA]</scope>
    <source>
        <strain>K12 / W3110 / ATCC 27325 / DSM 5911</strain>
    </source>
</reference>
<reference key="5">
    <citation type="journal article" date="1993" name="Mol. Microbiol.">
        <title>Homology between a genetic locus (mdoA) involved in the osmoregulated biosynthesis of periplasmic glucans in Escherichia coli and a genetic locus (hrpM) controlling pathogenicity of Pseudomonas syringae.</title>
        <authorList>
            <person name="Loubens I."/>
            <person name="Debarbieux L."/>
            <person name="Bohin A."/>
            <person name="Lacroix J.-M."/>
            <person name="Bohin J.-P."/>
        </authorList>
    </citation>
    <scope>NUCLEOTIDE SEQUENCE [GENOMIC DNA] OF 1-33</scope>
    <source>
        <strain>K12</strain>
    </source>
</reference>
<reference key="6">
    <citation type="journal article" date="1995" name="Nucleic Acids Res.">
        <title>Detection of new genes in a bacterial genome using Markov models for three gene classes.</title>
        <authorList>
            <person name="Borodovsky M."/>
            <person name="McIninch J."/>
            <person name="Koonin E.V."/>
            <person name="Rudd K.E."/>
            <person name="Medigue C."/>
            <person name="Danchin A."/>
        </authorList>
    </citation>
    <scope>IDENTIFICATION</scope>
</reference>
<keyword id="KW-1185">Reference proteome</keyword>
<keyword id="KW-0732">Signal</keyword>
<protein>
    <recommendedName>
        <fullName>Uncharacterized protein YceK</fullName>
    </recommendedName>
</protein>
<sequence>MRLIVVSIMVTLLSGCGSIISRTIPGQGHGNQYYPGVQWDVRDSAWRYVTILDLPFSLVFDTLLLPIDIHHGPYE</sequence>
<name>YCEK_ECOLI</name>
<organism>
    <name type="scientific">Escherichia coli (strain K12)</name>
    <dbReference type="NCBI Taxonomy" id="83333"/>
    <lineage>
        <taxon>Bacteria</taxon>
        <taxon>Pseudomonadati</taxon>
        <taxon>Pseudomonadota</taxon>
        <taxon>Gammaproteobacteria</taxon>
        <taxon>Enterobacterales</taxon>
        <taxon>Enterobacteriaceae</taxon>
        <taxon>Escherichia</taxon>
    </lineage>
</organism>
<evidence type="ECO:0000255" key="1"/>
<evidence type="ECO:0000305" key="2"/>
<gene>
    <name type="primary">yceK</name>
    <name type="ordered locus">b1050</name>
    <name type="ordered locus">JW5151</name>
</gene>
<accession>P0AB31</accession>
<accession>P45806</accession>
<accession>P75921</accession>
<proteinExistence type="inferred from homology"/>
<feature type="signal peptide" evidence="1">
    <location>
        <begin position="1"/>
        <end position="21"/>
    </location>
</feature>
<feature type="chain" id="PRO_0000013824" description="Uncharacterized protein YceK">
    <location>
        <begin position="22"/>
        <end position="75"/>
    </location>
</feature>
<dbReference type="EMBL" id="X59939">
    <property type="status" value="NOT_ANNOTATED_CDS"/>
    <property type="molecule type" value="Genomic_DNA"/>
</dbReference>
<dbReference type="EMBL" id="U00096">
    <property type="protein sequence ID" value="AAC74134.1"/>
    <property type="molecule type" value="Genomic_DNA"/>
</dbReference>
<dbReference type="EMBL" id="AP009048">
    <property type="protein sequence ID" value="BAA35849.2"/>
    <property type="molecule type" value="Genomic_DNA"/>
</dbReference>
<dbReference type="EMBL" id="X64197">
    <property type="status" value="NOT_ANNOTATED_CDS"/>
    <property type="molecule type" value="Genomic_DNA"/>
</dbReference>
<dbReference type="PIR" id="G64847">
    <property type="entry name" value="G64847"/>
</dbReference>
<dbReference type="RefSeq" id="NP_415568.1">
    <property type="nucleotide sequence ID" value="NC_000913.3"/>
</dbReference>
<dbReference type="RefSeq" id="WP_001237205.1">
    <property type="nucleotide sequence ID" value="NZ_STEB01000016.1"/>
</dbReference>
<dbReference type="BioGRID" id="4260687">
    <property type="interactions" value="256"/>
</dbReference>
<dbReference type="STRING" id="511145.b1050"/>
<dbReference type="PaxDb" id="511145-b1050"/>
<dbReference type="EnsemblBacteria" id="AAC74134">
    <property type="protein sequence ID" value="AAC74134"/>
    <property type="gene ID" value="b1050"/>
</dbReference>
<dbReference type="GeneID" id="945613"/>
<dbReference type="KEGG" id="ecj:JW5151"/>
<dbReference type="KEGG" id="eco:b1050"/>
<dbReference type="KEGG" id="ecoc:C3026_06395"/>
<dbReference type="PATRIC" id="fig|1411691.4.peg.1218"/>
<dbReference type="EchoBASE" id="EB2552"/>
<dbReference type="eggNOG" id="COG5645">
    <property type="taxonomic scope" value="Bacteria"/>
</dbReference>
<dbReference type="HOGENOM" id="CLU_164795_0_0_6"/>
<dbReference type="InParanoid" id="P0AB31"/>
<dbReference type="OMA" id="PWRFIAI"/>
<dbReference type="OrthoDB" id="5679649at2"/>
<dbReference type="PhylomeDB" id="P0AB31"/>
<dbReference type="BioCyc" id="EcoCyc:EG12689-MONOMER"/>
<dbReference type="PRO" id="PR:P0AB31"/>
<dbReference type="Proteomes" id="UP000000625">
    <property type="component" value="Chromosome"/>
</dbReference>
<dbReference type="GO" id="GO:0006974">
    <property type="term" value="P:DNA damage response"/>
    <property type="evidence" value="ECO:0000270"/>
    <property type="project" value="EcoliWiki"/>
</dbReference>
<dbReference type="InterPro" id="IPR010780">
    <property type="entry name" value="DUF1375"/>
</dbReference>
<dbReference type="NCBIfam" id="NF007555">
    <property type="entry name" value="PRK10175.1"/>
    <property type="match status" value="1"/>
</dbReference>
<dbReference type="Pfam" id="PF07119">
    <property type="entry name" value="DUF1375"/>
    <property type="match status" value="1"/>
</dbReference>
<dbReference type="PROSITE" id="PS51257">
    <property type="entry name" value="PROKAR_LIPOPROTEIN"/>
    <property type="match status" value="1"/>
</dbReference>
<comment type="similarity">
    <text evidence="2">To E.coli YidQ.</text>
</comment>